<organism>
    <name type="scientific">Brucella suis biovar 1 (strain 1330)</name>
    <dbReference type="NCBI Taxonomy" id="204722"/>
    <lineage>
        <taxon>Bacteria</taxon>
        <taxon>Pseudomonadati</taxon>
        <taxon>Pseudomonadota</taxon>
        <taxon>Alphaproteobacteria</taxon>
        <taxon>Hyphomicrobiales</taxon>
        <taxon>Brucellaceae</taxon>
        <taxon>Brucella/Ochrobactrum group</taxon>
        <taxon>Brucella</taxon>
    </lineage>
</organism>
<sequence length="216" mass="23230">MRVAIIDYGSGNLRSATKAFERAAHESGISAEIDLTCDAQRVASADRIVLPGVGAYADCRRGLDAVPGMVEALNDTVLKKARPFLGICVGMQLMSERGLEKTVTNGLGWIAGDVREMVPSDASLKIPQIGWNRIHVKHSHPIFDGIPAGDDGLHAYFVHSYMLDAKNASDVLAVTDYGGDVTAAVGRDNMVGTQFHPEKSQLLGLSLIANFLKWKP</sequence>
<comment type="function">
    <text evidence="1">IGPS catalyzes the conversion of PRFAR and glutamine to IGP, AICAR and glutamate. The HisH subunit catalyzes the hydrolysis of glutamine to glutamate and ammonia as part of the synthesis of IGP and AICAR. The resulting ammonia molecule is channeled to the active site of HisF.</text>
</comment>
<comment type="catalytic activity">
    <reaction evidence="1">
        <text>5-[(5-phospho-1-deoxy-D-ribulos-1-ylimino)methylamino]-1-(5-phospho-beta-D-ribosyl)imidazole-4-carboxamide + L-glutamine = D-erythro-1-(imidazol-4-yl)glycerol 3-phosphate + 5-amino-1-(5-phospho-beta-D-ribosyl)imidazole-4-carboxamide + L-glutamate + H(+)</text>
        <dbReference type="Rhea" id="RHEA:24793"/>
        <dbReference type="ChEBI" id="CHEBI:15378"/>
        <dbReference type="ChEBI" id="CHEBI:29985"/>
        <dbReference type="ChEBI" id="CHEBI:58278"/>
        <dbReference type="ChEBI" id="CHEBI:58359"/>
        <dbReference type="ChEBI" id="CHEBI:58475"/>
        <dbReference type="ChEBI" id="CHEBI:58525"/>
        <dbReference type="EC" id="4.3.2.10"/>
    </reaction>
</comment>
<comment type="catalytic activity">
    <reaction evidence="1">
        <text>L-glutamine + H2O = L-glutamate + NH4(+)</text>
        <dbReference type="Rhea" id="RHEA:15889"/>
        <dbReference type="ChEBI" id="CHEBI:15377"/>
        <dbReference type="ChEBI" id="CHEBI:28938"/>
        <dbReference type="ChEBI" id="CHEBI:29985"/>
        <dbReference type="ChEBI" id="CHEBI:58359"/>
        <dbReference type="EC" id="3.5.1.2"/>
    </reaction>
</comment>
<comment type="pathway">
    <text evidence="1">Amino-acid biosynthesis; L-histidine biosynthesis; L-histidine from 5-phospho-alpha-D-ribose 1-diphosphate: step 5/9.</text>
</comment>
<comment type="subunit">
    <text evidence="1">Heterodimer of HisH and HisF.</text>
</comment>
<comment type="subcellular location">
    <subcellularLocation>
        <location evidence="1">Cytoplasm</location>
    </subcellularLocation>
</comment>
<keyword id="KW-0028">Amino-acid biosynthesis</keyword>
<keyword id="KW-0963">Cytoplasm</keyword>
<keyword id="KW-0315">Glutamine amidotransferase</keyword>
<keyword id="KW-0368">Histidine biosynthesis</keyword>
<keyword id="KW-0378">Hydrolase</keyword>
<keyword id="KW-0456">Lyase</keyword>
<proteinExistence type="inferred from homology"/>
<name>HIS5_BRUSU</name>
<accession>Q8FY09</accession>
<accession>G0K931</accession>
<protein>
    <recommendedName>
        <fullName evidence="1">Imidazole glycerol phosphate synthase subunit HisH</fullName>
        <ecNumber evidence="1">4.3.2.10</ecNumber>
    </recommendedName>
    <alternativeName>
        <fullName evidence="1">IGP synthase glutaminase subunit</fullName>
        <ecNumber evidence="1">3.5.1.2</ecNumber>
    </alternativeName>
    <alternativeName>
        <fullName evidence="1">IGP synthase subunit HisH</fullName>
    </alternativeName>
    <alternativeName>
        <fullName evidence="1">ImGP synthase subunit HisH</fullName>
        <shortName evidence="1">IGPS subunit HisH</shortName>
    </alternativeName>
</protein>
<evidence type="ECO:0000255" key="1">
    <source>
        <dbReference type="HAMAP-Rule" id="MF_00278"/>
    </source>
</evidence>
<dbReference type="EC" id="4.3.2.10" evidence="1"/>
<dbReference type="EC" id="3.5.1.2" evidence="1"/>
<dbReference type="EMBL" id="AE014291">
    <property type="protein sequence ID" value="AAN30973.1"/>
    <property type="molecule type" value="Genomic_DNA"/>
</dbReference>
<dbReference type="EMBL" id="CP002997">
    <property type="protein sequence ID" value="AEM19390.1"/>
    <property type="molecule type" value="Genomic_DNA"/>
</dbReference>
<dbReference type="RefSeq" id="WP_004691159.1">
    <property type="nucleotide sequence ID" value="NZ_KN046804.1"/>
</dbReference>
<dbReference type="SMR" id="Q8FY09"/>
<dbReference type="GeneID" id="55591653"/>
<dbReference type="KEGG" id="bms:BR2083"/>
<dbReference type="KEGG" id="bsi:BS1330_I2077"/>
<dbReference type="PATRIC" id="fig|204722.22.peg.1931"/>
<dbReference type="HOGENOM" id="CLU_071837_2_0_5"/>
<dbReference type="PhylomeDB" id="Q8FY09"/>
<dbReference type="UniPathway" id="UPA00031">
    <property type="reaction ID" value="UER00010"/>
</dbReference>
<dbReference type="Proteomes" id="UP000007104">
    <property type="component" value="Chromosome I"/>
</dbReference>
<dbReference type="GO" id="GO:0005737">
    <property type="term" value="C:cytoplasm"/>
    <property type="evidence" value="ECO:0007669"/>
    <property type="project" value="UniProtKB-SubCell"/>
</dbReference>
<dbReference type="GO" id="GO:0004359">
    <property type="term" value="F:glutaminase activity"/>
    <property type="evidence" value="ECO:0007669"/>
    <property type="project" value="UniProtKB-EC"/>
</dbReference>
<dbReference type="GO" id="GO:0000107">
    <property type="term" value="F:imidazoleglycerol-phosphate synthase activity"/>
    <property type="evidence" value="ECO:0007669"/>
    <property type="project" value="UniProtKB-UniRule"/>
</dbReference>
<dbReference type="GO" id="GO:0016829">
    <property type="term" value="F:lyase activity"/>
    <property type="evidence" value="ECO:0007669"/>
    <property type="project" value="UniProtKB-KW"/>
</dbReference>
<dbReference type="GO" id="GO:0000105">
    <property type="term" value="P:L-histidine biosynthetic process"/>
    <property type="evidence" value="ECO:0007669"/>
    <property type="project" value="UniProtKB-UniRule"/>
</dbReference>
<dbReference type="CDD" id="cd01748">
    <property type="entry name" value="GATase1_IGP_Synthase"/>
    <property type="match status" value="1"/>
</dbReference>
<dbReference type="Gene3D" id="3.40.50.880">
    <property type="match status" value="1"/>
</dbReference>
<dbReference type="HAMAP" id="MF_00278">
    <property type="entry name" value="HisH"/>
    <property type="match status" value="1"/>
</dbReference>
<dbReference type="InterPro" id="IPR029062">
    <property type="entry name" value="Class_I_gatase-like"/>
</dbReference>
<dbReference type="InterPro" id="IPR017926">
    <property type="entry name" value="GATASE"/>
</dbReference>
<dbReference type="InterPro" id="IPR010139">
    <property type="entry name" value="Imidazole-glycPsynth_HisH"/>
</dbReference>
<dbReference type="NCBIfam" id="TIGR01855">
    <property type="entry name" value="IMP_synth_hisH"/>
    <property type="match status" value="1"/>
</dbReference>
<dbReference type="PANTHER" id="PTHR42701">
    <property type="entry name" value="IMIDAZOLE GLYCEROL PHOSPHATE SYNTHASE SUBUNIT HISH"/>
    <property type="match status" value="1"/>
</dbReference>
<dbReference type="PANTHER" id="PTHR42701:SF1">
    <property type="entry name" value="IMIDAZOLE GLYCEROL PHOSPHATE SYNTHASE SUBUNIT HISH"/>
    <property type="match status" value="1"/>
</dbReference>
<dbReference type="Pfam" id="PF00117">
    <property type="entry name" value="GATase"/>
    <property type="match status" value="1"/>
</dbReference>
<dbReference type="PIRSF" id="PIRSF000495">
    <property type="entry name" value="Amidotransf_hisH"/>
    <property type="match status" value="1"/>
</dbReference>
<dbReference type="SUPFAM" id="SSF52317">
    <property type="entry name" value="Class I glutamine amidotransferase-like"/>
    <property type="match status" value="1"/>
</dbReference>
<dbReference type="PROSITE" id="PS51273">
    <property type="entry name" value="GATASE_TYPE_1"/>
    <property type="match status" value="1"/>
</dbReference>
<reference key="1">
    <citation type="journal article" date="2002" name="Proc. Natl. Acad. Sci. U.S.A.">
        <title>The Brucella suis genome reveals fundamental similarities between animal and plant pathogens and symbionts.</title>
        <authorList>
            <person name="Paulsen I.T."/>
            <person name="Seshadri R."/>
            <person name="Nelson K.E."/>
            <person name="Eisen J.A."/>
            <person name="Heidelberg J.F."/>
            <person name="Read T.D."/>
            <person name="Dodson R.J."/>
            <person name="Umayam L.A."/>
            <person name="Brinkac L.M."/>
            <person name="Beanan M.J."/>
            <person name="Daugherty S.C."/>
            <person name="DeBoy R.T."/>
            <person name="Durkin A.S."/>
            <person name="Kolonay J.F."/>
            <person name="Madupu R."/>
            <person name="Nelson W.C."/>
            <person name="Ayodeji B."/>
            <person name="Kraul M."/>
            <person name="Shetty J."/>
            <person name="Malek J.A."/>
            <person name="Van Aken S.E."/>
            <person name="Riedmuller S."/>
            <person name="Tettelin H."/>
            <person name="Gill S.R."/>
            <person name="White O."/>
            <person name="Salzberg S.L."/>
            <person name="Hoover D.L."/>
            <person name="Lindler L.E."/>
            <person name="Halling S.M."/>
            <person name="Boyle S.M."/>
            <person name="Fraser C.M."/>
        </authorList>
    </citation>
    <scope>NUCLEOTIDE SEQUENCE [LARGE SCALE GENOMIC DNA]</scope>
    <source>
        <strain>1330</strain>
    </source>
</reference>
<reference key="2">
    <citation type="journal article" date="2011" name="J. Bacteriol.">
        <title>Revised genome sequence of Brucella suis 1330.</title>
        <authorList>
            <person name="Tae H."/>
            <person name="Shallom S."/>
            <person name="Settlage R."/>
            <person name="Preston D."/>
            <person name="Adams L.G."/>
            <person name="Garner H.R."/>
        </authorList>
    </citation>
    <scope>NUCLEOTIDE SEQUENCE [LARGE SCALE GENOMIC DNA]</scope>
    <source>
        <strain>1330</strain>
    </source>
</reference>
<feature type="chain" id="PRO_0000152353" description="Imidazole glycerol phosphate synthase subunit HisH">
    <location>
        <begin position="1"/>
        <end position="216"/>
    </location>
</feature>
<feature type="domain" description="Glutamine amidotransferase type-1" evidence="1">
    <location>
        <begin position="2"/>
        <end position="216"/>
    </location>
</feature>
<feature type="active site" description="Nucleophile" evidence="1">
    <location>
        <position position="88"/>
    </location>
</feature>
<feature type="active site" evidence="1">
    <location>
        <position position="196"/>
    </location>
</feature>
<feature type="active site" evidence="1">
    <location>
        <position position="198"/>
    </location>
</feature>
<gene>
    <name evidence="1" type="primary">hisH</name>
    <name type="ordered locus">BR2083</name>
    <name type="ordered locus">BS1330_I2077</name>
</gene>